<evidence type="ECO:0000255" key="1">
    <source>
        <dbReference type="HAMAP-Rule" id="MF_01392"/>
    </source>
</evidence>
<feature type="chain" id="PRO_0000363624" description="Cytochrome c biogenesis protein CcsB">
    <location>
        <begin position="1"/>
        <end position="456"/>
    </location>
</feature>
<feature type="transmembrane region" description="Helical" evidence="1">
    <location>
        <begin position="29"/>
        <end position="49"/>
    </location>
</feature>
<feature type="transmembrane region" description="Helical" evidence="1">
    <location>
        <begin position="88"/>
        <end position="108"/>
    </location>
</feature>
<feature type="transmembrane region" description="Helical" evidence="1">
    <location>
        <begin position="174"/>
        <end position="194"/>
    </location>
</feature>
<organism>
    <name type="scientific">Synechococcus elongatus (strain ATCC 33912 / PCC 7942 / FACHB-805)</name>
    <name type="common">Anacystis nidulans R2</name>
    <dbReference type="NCBI Taxonomy" id="1140"/>
    <lineage>
        <taxon>Bacteria</taxon>
        <taxon>Bacillati</taxon>
        <taxon>Cyanobacteriota</taxon>
        <taxon>Cyanophyceae</taxon>
        <taxon>Synechococcales</taxon>
        <taxon>Synechococcaceae</taxon>
        <taxon>Synechococcus</taxon>
    </lineage>
</organism>
<dbReference type="EMBL" id="CP000100">
    <property type="protein sequence ID" value="ABB56354.1"/>
    <property type="molecule type" value="Genomic_DNA"/>
</dbReference>
<dbReference type="RefSeq" id="WP_011243503.1">
    <property type="nucleotide sequence ID" value="NZ_JACJTX010000002.1"/>
</dbReference>
<dbReference type="STRING" id="1140.Synpcc7942_0322"/>
<dbReference type="PaxDb" id="1140-Synpcc7942_0322"/>
<dbReference type="KEGG" id="syf:Synpcc7942_0322"/>
<dbReference type="eggNOG" id="COG1333">
    <property type="taxonomic scope" value="Bacteria"/>
</dbReference>
<dbReference type="HOGENOM" id="CLU_034630_0_0_3"/>
<dbReference type="OrthoDB" id="9770923at2"/>
<dbReference type="BioCyc" id="SYNEL:SYNPCC7942_0322-MONOMER"/>
<dbReference type="Proteomes" id="UP000889800">
    <property type="component" value="Chromosome"/>
</dbReference>
<dbReference type="GO" id="GO:0031676">
    <property type="term" value="C:plasma membrane-derived thylakoid membrane"/>
    <property type="evidence" value="ECO:0007669"/>
    <property type="project" value="UniProtKB-SubCell"/>
</dbReference>
<dbReference type="GO" id="GO:0017004">
    <property type="term" value="P:cytochrome complex assembly"/>
    <property type="evidence" value="ECO:0007669"/>
    <property type="project" value="UniProtKB-UniRule"/>
</dbReference>
<dbReference type="HAMAP" id="MF_01392">
    <property type="entry name" value="CytC_Ccs1"/>
    <property type="match status" value="1"/>
</dbReference>
<dbReference type="InterPro" id="IPR023494">
    <property type="entry name" value="Cyt_c_bgen_Ccs1/CcsB/ResB"/>
</dbReference>
<dbReference type="InterPro" id="IPR007816">
    <property type="entry name" value="ResB-like_domain"/>
</dbReference>
<dbReference type="PANTHER" id="PTHR31566">
    <property type="entry name" value="CYTOCHROME C BIOGENESIS PROTEIN CCS1, CHLOROPLASTIC"/>
    <property type="match status" value="1"/>
</dbReference>
<dbReference type="PANTHER" id="PTHR31566:SF0">
    <property type="entry name" value="CYTOCHROME C BIOGENESIS PROTEIN CCS1, CHLOROPLASTIC"/>
    <property type="match status" value="1"/>
</dbReference>
<dbReference type="Pfam" id="PF05140">
    <property type="entry name" value="ResB"/>
    <property type="match status" value="2"/>
</dbReference>
<keyword id="KW-0201">Cytochrome c-type biogenesis</keyword>
<keyword id="KW-0472">Membrane</keyword>
<keyword id="KW-1185">Reference proteome</keyword>
<keyword id="KW-0793">Thylakoid</keyword>
<keyword id="KW-0812">Transmembrane</keyword>
<keyword id="KW-1133">Transmembrane helix</keyword>
<reference key="1">
    <citation type="submission" date="2005-08" db="EMBL/GenBank/DDBJ databases">
        <title>Complete sequence of chromosome 1 of Synechococcus elongatus PCC 7942.</title>
        <authorList>
            <consortium name="US DOE Joint Genome Institute"/>
            <person name="Copeland A."/>
            <person name="Lucas S."/>
            <person name="Lapidus A."/>
            <person name="Barry K."/>
            <person name="Detter J.C."/>
            <person name="Glavina T."/>
            <person name="Hammon N."/>
            <person name="Israni S."/>
            <person name="Pitluck S."/>
            <person name="Schmutz J."/>
            <person name="Larimer F."/>
            <person name="Land M."/>
            <person name="Kyrpides N."/>
            <person name="Lykidis A."/>
            <person name="Golden S."/>
            <person name="Richardson P."/>
        </authorList>
    </citation>
    <scope>NUCLEOTIDE SEQUENCE [LARGE SCALE GENOMIC DNA]</scope>
    <source>
        <strain>ATCC 33912 / PCC 7942 / FACHB-805</strain>
    </source>
</reference>
<accession>Q31RG5</accession>
<name>CCS1_SYNE7</name>
<proteinExistence type="inferred from homology"/>
<protein>
    <recommendedName>
        <fullName evidence="1">Cytochrome c biogenesis protein CcsB</fullName>
    </recommendedName>
</protein>
<gene>
    <name evidence="1" type="primary">ccsB</name>
    <name evidence="1" type="synonym">ccs1</name>
    <name type="ordered locus">Synpcc7942_0322</name>
</gene>
<sequence>MTSDPLASPSFADRWRRGQQLFWTWLADLRLAILLLLAIAIASATGTVIEQGQSLAFYQENYPTDPALFGFLSWRWILSLGLDHVYRAGWFLGLLILFGASLTACTFRRQWPALRAAQRWQFYQEPRQFTKLALSASLPQGKLDSLEPLLLQRRYRLFRADDVLYARRGLAGRVGPILVHAGMLVVLGGAIWGSLGGFYAQEMIPSGETFQVRNIVDAGPWSGSRIPQDWAVKVNRFWIDYAPDGRIDQFYSDLSVVDREGQEQDRQTIHVNQPLRYGGLTFYQADWAIAAAQVRLNNSPVLQLPMAQLPAAGRIWGTFVPTKPDLSSGVSLIAKDLQGTAVIYGSNGEPLGTLRKGMAIEVEGIRLSLVDLVGSTGLQIKSDPGIPWVYAGFLFVMVGVVCSYVSHAQVWALEQDGQLYIGGRSNRALVAFEQEMLAVLAQLDAQSNHSAETAIA</sequence>
<comment type="function">
    <text evidence="1">Required during biogenesis of c-type cytochromes (cytochrome c6 and cytochrome f) at the step of heme attachment.</text>
</comment>
<comment type="subunit">
    <text evidence="1">May interact with CcsA.</text>
</comment>
<comment type="subcellular location">
    <subcellularLocation>
        <location evidence="1">Cellular thylakoid membrane</location>
        <topology evidence="1">Multi-pass membrane protein</topology>
    </subcellularLocation>
</comment>
<comment type="similarity">
    <text evidence="1">Belongs to the Ccs1/CcsB family.</text>
</comment>